<evidence type="ECO:0000255" key="1">
    <source>
        <dbReference type="PROSITE-ProRule" id="PRU00137"/>
    </source>
</evidence>
<evidence type="ECO:0000303" key="2">
    <source>
    </source>
</evidence>
<evidence type="ECO:0000303" key="3">
    <source>
    </source>
</evidence>
<evidence type="ECO:0000305" key="4"/>
<evidence type="ECO:0000312" key="5">
    <source>
        <dbReference type="HGNC" id="HGNC:18151"/>
    </source>
</evidence>
<keyword id="KW-0025">Alternative splicing</keyword>
<keyword id="KW-0963">Cytoplasm</keyword>
<keyword id="KW-0509">mRNA transport</keyword>
<keyword id="KW-0539">Nucleus</keyword>
<keyword id="KW-0653">Protein transport</keyword>
<keyword id="KW-1267">Proteomics identification</keyword>
<keyword id="KW-1185">Reference proteome</keyword>
<keyword id="KW-0813">Transport</keyword>
<comment type="function">
    <text>Regulator of protein export for NES-containing proteins. Also plays a role in mRNA nuclear export.</text>
</comment>
<comment type="subunit">
    <text>Associates with NXF1, NXF2, NXF3 and NXF5.</text>
</comment>
<comment type="interaction">
    <interactant intactId="EBI-752122">
        <id>Q9NPJ8</id>
    </interactant>
    <interactant intactId="EBI-10171570">
        <id>Q68D86</id>
        <label>CCDC102B</label>
    </interactant>
    <organismsDiffer>false</organismsDiffer>
    <experiments>3</experiments>
</comment>
<comment type="interaction">
    <interactant intactId="EBI-752122">
        <id>Q9NPJ8</id>
    </interactant>
    <interactant intactId="EBI-741977">
        <id>Q96MT8</id>
        <label>CEP63</label>
    </interactant>
    <organismsDiffer>false</organismsDiffer>
    <experiments>3</experiments>
</comment>
<comment type="interaction">
    <interactant intactId="EBI-752122">
        <id>Q9NPJ8</id>
    </interactant>
    <interactant intactId="EBI-618309">
        <id>Q08379</id>
        <label>GOLGA2</label>
    </interactant>
    <organismsDiffer>false</organismsDiffer>
    <experiments>3</experiments>
</comment>
<comment type="interaction">
    <interactant intactId="EBI-752122">
        <id>Q9NPJ8</id>
    </interactant>
    <interactant intactId="EBI-10215395">
        <id>V9HWB8</id>
        <label>HEL-S-30</label>
    </interactant>
    <organismsDiffer>false</organismsDiffer>
    <experiments>3</experiments>
</comment>
<comment type="interaction">
    <interactant intactId="EBI-752122">
        <id>Q9NPJ8</id>
    </interactant>
    <interactant intactId="EBI-739832">
        <id>Q8TBB1</id>
        <label>LNX1</label>
    </interactant>
    <organismsDiffer>false</organismsDiffer>
    <experiments>3</experiments>
</comment>
<comment type="interaction">
    <interactant intactId="EBI-752122">
        <id>Q9NPJ8</id>
    </interactant>
    <interactant intactId="EBI-750038">
        <id>Q9H4D5</id>
        <label>NXF3</label>
    </interactant>
    <organismsDiffer>false</organismsDiffer>
    <experiments>9</experiments>
</comment>
<comment type="interaction">
    <interactant intactId="EBI-752122">
        <id>Q9NPJ8</id>
    </interactant>
    <interactant intactId="EBI-1047946">
        <id>P26045</id>
        <label>PTPN3</label>
    </interactant>
    <organismsDiffer>false</organismsDiffer>
    <experiments>3</experiments>
</comment>
<comment type="interaction">
    <interactant intactId="EBI-752122">
        <id>Q9NPJ8</id>
    </interactant>
    <interactant intactId="EBI-307352">
        <id>Q04864</id>
        <label>REL</label>
    </interactant>
    <organismsDiffer>false</organismsDiffer>
    <experiments>3</experiments>
</comment>
<comment type="interaction">
    <interactant intactId="EBI-752122">
        <id>Q9NPJ8</id>
    </interactant>
    <interactant intactId="EBI-2902395">
        <id>Q9BWW4</id>
        <label>SSBP3</label>
    </interactant>
    <organismsDiffer>false</organismsDiffer>
    <experiments>3</experiments>
</comment>
<comment type="interaction">
    <interactant intactId="EBI-752122">
        <id>Q9NPJ8</id>
    </interactant>
    <interactant intactId="EBI-740098">
        <id>P36406</id>
        <label>TRIM23</label>
    </interactant>
    <organismsDiffer>false</organismsDiffer>
    <experiments>3</experiments>
</comment>
<comment type="interaction">
    <interactant intactId="EBI-752122">
        <id>Q9NPJ8</id>
    </interactant>
    <interactant intactId="EBI-946185">
        <id>Q70EL1</id>
        <label>USP54</label>
    </interactant>
    <organismsDiffer>false</organismsDiffer>
    <experiments>3</experiments>
</comment>
<comment type="interaction">
    <interactant intactId="EBI-10698339">
        <id>Q9NPJ8-3</id>
    </interactant>
    <interactant intactId="EBI-21535880">
        <id>Q92870-2</id>
        <label>APBB2</label>
    </interactant>
    <organismsDiffer>false</organismsDiffer>
    <experiments>3</experiments>
</comment>
<comment type="interaction">
    <interactant intactId="EBI-10698339">
        <id>Q9NPJ8-3</id>
    </interactant>
    <interactant intactId="EBI-742054">
        <id>Q96D03</id>
        <label>DDIT4L</label>
    </interactant>
    <organismsDiffer>false</organismsDiffer>
    <experiments>4</experiments>
</comment>
<comment type="interaction">
    <interactant intactId="EBI-10698339">
        <id>Q9NPJ8-3</id>
    </interactant>
    <interactant intactId="EBI-10968534">
        <id>P50570-2</id>
        <label>DNM2</label>
    </interactant>
    <organismsDiffer>false</organismsDiffer>
    <experiments>3</experiments>
</comment>
<comment type="interaction">
    <interactant intactId="EBI-10698339">
        <id>Q9NPJ8-3</id>
    </interactant>
    <interactant intactId="EBI-618309">
        <id>Q08379</id>
        <label>GOLGA2</label>
    </interactant>
    <organismsDiffer>false</organismsDiffer>
    <experiments>3</experiments>
</comment>
<comment type="interaction">
    <interactant intactId="EBI-10698339">
        <id>Q9NPJ8-3</id>
    </interactant>
    <interactant intactId="EBI-5916454">
        <id>A6NEM1</id>
        <label>GOLGA6L9</label>
    </interactant>
    <organismsDiffer>false</organismsDiffer>
    <experiments>3</experiments>
</comment>
<comment type="interaction">
    <interactant intactId="EBI-10698339">
        <id>Q9NPJ8-3</id>
    </interactant>
    <interactant intactId="EBI-466029">
        <id>P42858</id>
        <label>HTT</label>
    </interactant>
    <organismsDiffer>false</organismsDiffer>
    <experiments>15</experiments>
</comment>
<comment type="interaction">
    <interactant intactId="EBI-10698339">
        <id>Q9NPJ8-3</id>
    </interactant>
    <interactant intactId="EBI-747204">
        <id>Q9UKT9</id>
        <label>IKZF3</label>
    </interactant>
    <organismsDiffer>false</organismsDiffer>
    <experiments>3</experiments>
</comment>
<comment type="interaction">
    <interactant intactId="EBI-10698339">
        <id>Q9NPJ8-3</id>
    </interactant>
    <interactant intactId="EBI-444173">
        <id>Q9GZY0</id>
        <label>NXF2</label>
    </interactant>
    <organismsDiffer>false</organismsDiffer>
    <experiments>3</experiments>
</comment>
<comment type="interaction">
    <interactant intactId="EBI-10698339">
        <id>Q9NPJ8-3</id>
    </interactant>
    <interactant intactId="EBI-750038">
        <id>Q9H4D5</id>
        <label>NXF3</label>
    </interactant>
    <organismsDiffer>false</organismsDiffer>
    <experiments>9</experiments>
</comment>
<comment type="interaction">
    <interactant intactId="EBI-10698339">
        <id>Q9NPJ8-3</id>
    </interactant>
    <interactant intactId="EBI-6912267">
        <id>A6NK89</id>
        <label>RASSF10</label>
    </interactant>
    <organismsDiffer>false</organismsDiffer>
    <experiments>3</experiments>
</comment>
<comment type="interaction">
    <interactant intactId="EBI-10698339">
        <id>Q9NPJ8-3</id>
    </interactant>
    <interactant intactId="EBI-395421">
        <id>Q16637</id>
        <label>SMN2</label>
    </interactant>
    <organismsDiffer>false</organismsDiffer>
    <experiments>3</experiments>
</comment>
<comment type="interaction">
    <interactant intactId="EBI-10698339">
        <id>Q9NPJ8-3</id>
    </interactant>
    <interactant intactId="EBI-2902395">
        <id>Q9BWW4</id>
        <label>SSBP3</label>
    </interactant>
    <organismsDiffer>false</organismsDiffer>
    <experiments>3</experiments>
</comment>
<comment type="interaction">
    <interactant intactId="EBI-10698339">
        <id>Q9NPJ8-3</id>
    </interactant>
    <interactant intactId="EBI-13636688">
        <id>P15884-3</id>
        <label>TCF4</label>
    </interactant>
    <organismsDiffer>false</organismsDiffer>
    <experiments>3</experiments>
</comment>
<comment type="interaction">
    <interactant intactId="EBI-10698339">
        <id>Q9NPJ8-3</id>
    </interactant>
    <interactant intactId="EBI-625509">
        <id>Q8N720</id>
        <label>ZNF655</label>
    </interactant>
    <organismsDiffer>false</organismsDiffer>
    <experiments>3</experiments>
</comment>
<comment type="subcellular location">
    <subcellularLocation>
        <location>Nucleus</location>
    </subcellularLocation>
    <subcellularLocation>
        <location>Cytoplasm</location>
    </subcellularLocation>
    <text>Shuttles between the nucleus and the cytoplasm.</text>
</comment>
<comment type="alternative products">
    <event type="alternative splicing"/>
    <isoform>
        <id>Q9NPJ8-1</id>
        <name>1</name>
        <name>A</name>
        <name>p15-2a</name>
        <sequence type="displayed"/>
    </isoform>
    <isoform>
        <id>Q9NPJ8-3</id>
        <name>3</name>
        <sequence type="described" ref="VSP_037540"/>
    </isoform>
    <isoform>
        <id>Q9NPJ8-4</id>
        <name>4</name>
        <name>B</name>
        <name>p15-2b</name>
        <sequence type="described" ref="VSP_037539"/>
    </isoform>
</comment>
<comment type="sequence caution" evidence="4">
    <conflict type="erroneous initiation">
        <sequence resource="EMBL-CDS" id="BAB14511"/>
    </conflict>
    <text>Extended N-terminus.</text>
</comment>
<comment type="sequence caution" evidence="4">
    <conflict type="erroneous initiation">
        <sequence resource="EMBL-CDS" id="CAC01129"/>
    </conflict>
    <text>Extended N-terminus.</text>
</comment>
<sequence>MATSLDFKTYVDQACRAAEEFVNIYYETMDKRRRALTRLYLDKATLIWNGNAVSGLDALNNFFDTLPSSEFQVNMLDCQPVHEQATQSQTTVLVVTSGTVKFDGNKQHFFNQNFLLTAQSTPNNTVWKIASDCFRFQDWSSS</sequence>
<accession>Q9NPJ8</accession>
<accession>D3DUY1</accession>
<accession>Q0VAN8</accession>
<accession>Q5JYV5</accession>
<accession>Q5JYV6</accession>
<accession>Q5JYV7</accession>
<accession>Q9H8U0</accession>
<accession>Q9NQ64</accession>
<accession>Q9NRL7</accession>
<accession>Q9Y3M4</accession>
<accession>Q9Y3M5</accession>
<proteinExistence type="evidence at protein level"/>
<dbReference type="EMBL" id="AJ277591">
    <property type="protein sequence ID" value="CAB96371.1"/>
    <property type="molecule type" value="mRNA"/>
</dbReference>
<dbReference type="EMBL" id="AJ278323">
    <property type="protein sequence ID" value="CAC01129.1"/>
    <property type="status" value="ALT_INIT"/>
    <property type="molecule type" value="mRNA"/>
</dbReference>
<dbReference type="EMBL" id="AF246127">
    <property type="protein sequence ID" value="AAF78034.1"/>
    <property type="molecule type" value="mRNA"/>
</dbReference>
<dbReference type="EMBL" id="AF201942">
    <property type="protein sequence ID" value="AAF86878.1"/>
    <property type="molecule type" value="mRNA"/>
</dbReference>
<dbReference type="EMBL" id="AF212223">
    <property type="protein sequence ID" value="AAF87325.1"/>
    <property type="molecule type" value="mRNA"/>
</dbReference>
<dbReference type="EMBL" id="AK023289">
    <property type="protein sequence ID" value="BAB14511.1"/>
    <property type="status" value="ALT_INIT"/>
    <property type="molecule type" value="mRNA"/>
</dbReference>
<dbReference type="EMBL" id="AL031387">
    <property type="status" value="NOT_ANNOTATED_CDS"/>
    <property type="molecule type" value="Genomic_DNA"/>
</dbReference>
<dbReference type="EMBL" id="CH471120">
    <property type="protein sequence ID" value="EAX02677.1"/>
    <property type="molecule type" value="Genomic_DNA"/>
</dbReference>
<dbReference type="EMBL" id="CH471120">
    <property type="protein sequence ID" value="EAX02678.1"/>
    <property type="molecule type" value="Genomic_DNA"/>
</dbReference>
<dbReference type="EMBL" id="BC014888">
    <property type="status" value="NOT_ANNOTATED_CDS"/>
    <property type="molecule type" value="mRNA"/>
</dbReference>
<dbReference type="EMBL" id="CH471120">
    <property type="protein sequence ID" value="EAX02680.1"/>
    <property type="molecule type" value="Genomic_DNA"/>
</dbReference>
<dbReference type="EMBL" id="BC120984">
    <property type="protein sequence ID" value="AAI20985.1"/>
    <property type="molecule type" value="mRNA"/>
</dbReference>
<dbReference type="EMBL" id="BC120985">
    <property type="protein sequence ID" value="AAI20986.1"/>
    <property type="molecule type" value="mRNA"/>
</dbReference>
<dbReference type="CCDS" id="CCDS14546.1">
    <molecule id="Q9NPJ8-3"/>
</dbReference>
<dbReference type="CCDS" id="CCDS56605.1">
    <molecule id="Q9NPJ8-1"/>
</dbReference>
<dbReference type="CCDS" id="CCDS56606.1">
    <molecule id="Q9NPJ8-4"/>
</dbReference>
<dbReference type="RefSeq" id="NP_001229546.1">
    <molecule id="Q9NPJ8-1"/>
    <property type="nucleotide sequence ID" value="NM_001242617.2"/>
</dbReference>
<dbReference type="RefSeq" id="NP_001229547.1">
    <molecule id="Q9NPJ8-4"/>
    <property type="nucleotide sequence ID" value="NM_001242618.2"/>
</dbReference>
<dbReference type="RefSeq" id="NP_061168.2">
    <molecule id="Q9NPJ8-3"/>
    <property type="nucleotide sequence ID" value="NM_018698.4"/>
</dbReference>
<dbReference type="RefSeq" id="XP_016885137.1">
    <molecule id="Q9NPJ8-4"/>
    <property type="nucleotide sequence ID" value="XM_017029648.3"/>
</dbReference>
<dbReference type="RefSeq" id="XP_054183375.1">
    <molecule id="Q9NPJ8-4"/>
    <property type="nucleotide sequence ID" value="XM_054327400.1"/>
</dbReference>
<dbReference type="SMR" id="Q9NPJ8"/>
<dbReference type="BioGRID" id="120999">
    <property type="interactions" value="48"/>
</dbReference>
<dbReference type="ComplexPortal" id="CPX-2401">
    <property type="entry name" value="NXF2-NXT2 mRNA nuclear export factor complex"/>
</dbReference>
<dbReference type="ComplexPortal" id="CPX-2435">
    <property type="entry name" value="NXF1-NXT2 mRNA nuclear export factor complex"/>
</dbReference>
<dbReference type="ComplexPortal" id="CPX-2549">
    <property type="entry name" value="NXF5-NXT2 mRNA nuclear export factor complex"/>
</dbReference>
<dbReference type="ComplexPortal" id="CPX-2612">
    <property type="entry name" value="NXF3-NXT2 mRNA nuclear export factor complex"/>
</dbReference>
<dbReference type="FunCoup" id="Q9NPJ8">
    <property type="interactions" value="3103"/>
</dbReference>
<dbReference type="IntAct" id="Q9NPJ8">
    <property type="interactions" value="46"/>
</dbReference>
<dbReference type="MINT" id="Q9NPJ8"/>
<dbReference type="STRING" id="9606.ENSP00000218004"/>
<dbReference type="GlyGen" id="Q9NPJ8">
    <property type="glycosylation" value="1 site, 1 O-linked glycan (1 site)"/>
</dbReference>
<dbReference type="iPTMnet" id="Q9NPJ8"/>
<dbReference type="PhosphoSitePlus" id="Q9NPJ8"/>
<dbReference type="BioMuta" id="NXT2"/>
<dbReference type="jPOST" id="Q9NPJ8"/>
<dbReference type="MassIVE" id="Q9NPJ8"/>
<dbReference type="PaxDb" id="9606-ENSP00000218004"/>
<dbReference type="PeptideAtlas" id="Q9NPJ8"/>
<dbReference type="ProteomicsDB" id="82029">
    <molecule id="Q9NPJ8-1"/>
</dbReference>
<dbReference type="ProteomicsDB" id="82031">
    <molecule id="Q9NPJ8-3"/>
</dbReference>
<dbReference type="ProteomicsDB" id="82032">
    <molecule id="Q9NPJ8-4"/>
</dbReference>
<dbReference type="Pumba" id="Q9NPJ8"/>
<dbReference type="Antibodypedia" id="15334">
    <property type="antibodies" value="38 antibodies from 18 providers"/>
</dbReference>
<dbReference type="DNASU" id="55916"/>
<dbReference type="Ensembl" id="ENST00000218004.5">
    <molecule id="Q9NPJ8-3"/>
    <property type="protein sequence ID" value="ENSP00000218004.1"/>
    <property type="gene ID" value="ENSG00000101888.12"/>
</dbReference>
<dbReference type="Ensembl" id="ENST00000372103.1">
    <molecule id="Q9NPJ8-4"/>
    <property type="protein sequence ID" value="ENSP00000361175.1"/>
    <property type="gene ID" value="ENSG00000101888.12"/>
</dbReference>
<dbReference type="Ensembl" id="ENST00000372106.6">
    <molecule id="Q9NPJ8-1"/>
    <property type="protein sequence ID" value="ENSP00000361178.1"/>
    <property type="gene ID" value="ENSG00000101888.12"/>
</dbReference>
<dbReference type="Ensembl" id="ENST00000372107.5">
    <molecule id="Q9NPJ8-4"/>
    <property type="protein sequence ID" value="ENSP00000361179.1"/>
    <property type="gene ID" value="ENSG00000101888.12"/>
</dbReference>
<dbReference type="GeneID" id="55916"/>
<dbReference type="KEGG" id="hsa:55916"/>
<dbReference type="MANE-Select" id="ENST00000372106.6">
    <property type="protein sequence ID" value="ENSP00000361178.1"/>
    <property type="RefSeq nucleotide sequence ID" value="NM_001242617.2"/>
    <property type="RefSeq protein sequence ID" value="NP_001229546.1"/>
</dbReference>
<dbReference type="UCSC" id="uc004eoe.3">
    <molecule id="Q9NPJ8-1"/>
    <property type="organism name" value="human"/>
</dbReference>
<dbReference type="AGR" id="HGNC:18151"/>
<dbReference type="CTD" id="55916"/>
<dbReference type="GeneCards" id="NXT2"/>
<dbReference type="HGNC" id="HGNC:18151">
    <property type="gene designation" value="NXT2"/>
</dbReference>
<dbReference type="HPA" id="ENSG00000101888">
    <property type="expression patterns" value="Low tissue specificity"/>
</dbReference>
<dbReference type="MIM" id="300320">
    <property type="type" value="gene"/>
</dbReference>
<dbReference type="neXtProt" id="NX_Q9NPJ8"/>
<dbReference type="OpenTargets" id="ENSG00000101888"/>
<dbReference type="PharmGKB" id="PA134928861"/>
<dbReference type="VEuPathDB" id="HostDB:ENSG00000101888"/>
<dbReference type="eggNOG" id="KOG4353">
    <property type="taxonomic scope" value="Eukaryota"/>
</dbReference>
<dbReference type="GeneTree" id="ENSGT00940000156381"/>
<dbReference type="HOGENOM" id="CLU_122448_1_0_1"/>
<dbReference type="InParanoid" id="Q9NPJ8"/>
<dbReference type="OMA" id="HFTRLYY"/>
<dbReference type="OrthoDB" id="25408at2759"/>
<dbReference type="PAN-GO" id="Q9NPJ8">
    <property type="GO annotations" value="2 GO annotations based on evolutionary models"/>
</dbReference>
<dbReference type="PhylomeDB" id="Q9NPJ8"/>
<dbReference type="TreeFam" id="TF318944"/>
<dbReference type="PathwayCommons" id="Q9NPJ8"/>
<dbReference type="SignaLink" id="Q9NPJ8"/>
<dbReference type="BioGRID-ORCS" id="55916">
    <property type="hits" value="17 hits in 787 CRISPR screens"/>
</dbReference>
<dbReference type="ChiTaRS" id="NXT2">
    <property type="organism name" value="human"/>
</dbReference>
<dbReference type="GenomeRNAi" id="55916"/>
<dbReference type="Pharos" id="Q9NPJ8">
    <property type="development level" value="Tdark"/>
</dbReference>
<dbReference type="PRO" id="PR:Q9NPJ8"/>
<dbReference type="Proteomes" id="UP000005640">
    <property type="component" value="Chromosome X"/>
</dbReference>
<dbReference type="RNAct" id="Q9NPJ8">
    <property type="molecule type" value="protein"/>
</dbReference>
<dbReference type="Bgee" id="ENSG00000101888">
    <property type="expression patterns" value="Expressed in hair follicle and 189 other cell types or tissues"/>
</dbReference>
<dbReference type="GO" id="GO:0005829">
    <property type="term" value="C:cytosol"/>
    <property type="evidence" value="ECO:0000314"/>
    <property type="project" value="HPA"/>
</dbReference>
<dbReference type="GO" id="GO:0044613">
    <property type="term" value="C:nuclear pore central transport channel"/>
    <property type="evidence" value="ECO:0000318"/>
    <property type="project" value="GO_Central"/>
</dbReference>
<dbReference type="GO" id="GO:0042272">
    <property type="term" value="C:nuclear RNA export factor complex"/>
    <property type="evidence" value="ECO:0000353"/>
    <property type="project" value="ComplexPortal"/>
</dbReference>
<dbReference type="GO" id="GO:0005654">
    <property type="term" value="C:nucleoplasm"/>
    <property type="evidence" value="ECO:0000314"/>
    <property type="project" value="HPA"/>
</dbReference>
<dbReference type="GO" id="GO:0005634">
    <property type="term" value="C:nucleus"/>
    <property type="evidence" value="ECO:0000250"/>
    <property type="project" value="ComplexPortal"/>
</dbReference>
<dbReference type="GO" id="GO:0048471">
    <property type="term" value="C:perinuclear region of cytoplasm"/>
    <property type="evidence" value="ECO:0000250"/>
    <property type="project" value="UniProtKB"/>
</dbReference>
<dbReference type="GO" id="GO:0006406">
    <property type="term" value="P:mRNA export from nucleus"/>
    <property type="evidence" value="ECO:0000250"/>
    <property type="project" value="ComplexPortal"/>
</dbReference>
<dbReference type="GO" id="GO:0016973">
    <property type="term" value="P:poly(A)+ mRNA export from nucleus"/>
    <property type="evidence" value="ECO:0000318"/>
    <property type="project" value="GO_Central"/>
</dbReference>
<dbReference type="GO" id="GO:0015031">
    <property type="term" value="P:protein transport"/>
    <property type="evidence" value="ECO:0007669"/>
    <property type="project" value="UniProtKB-KW"/>
</dbReference>
<dbReference type="CDD" id="cd00780">
    <property type="entry name" value="NTF2"/>
    <property type="match status" value="1"/>
</dbReference>
<dbReference type="FunFam" id="3.10.450.50:FF:000006">
    <property type="entry name" value="NTF2-related export protein 2 isoform 1"/>
    <property type="match status" value="1"/>
</dbReference>
<dbReference type="Gene3D" id="3.10.450.50">
    <property type="match status" value="1"/>
</dbReference>
<dbReference type="InterPro" id="IPR045875">
    <property type="entry name" value="NTF2"/>
</dbReference>
<dbReference type="InterPro" id="IPR032710">
    <property type="entry name" value="NTF2-like_dom_sf"/>
</dbReference>
<dbReference type="InterPro" id="IPR002075">
    <property type="entry name" value="NTF2_dom"/>
</dbReference>
<dbReference type="InterPro" id="IPR018222">
    <property type="entry name" value="Nuclear_transport_factor_2_euk"/>
</dbReference>
<dbReference type="PANTHER" id="PTHR12612">
    <property type="entry name" value="NUCLEAR TRANSPORT FACTOR 2"/>
    <property type="match status" value="1"/>
</dbReference>
<dbReference type="Pfam" id="PF02136">
    <property type="entry name" value="NTF2"/>
    <property type="match status" value="1"/>
</dbReference>
<dbReference type="SUPFAM" id="SSF54427">
    <property type="entry name" value="NTF2-like"/>
    <property type="match status" value="1"/>
</dbReference>
<dbReference type="PROSITE" id="PS50177">
    <property type="entry name" value="NTF2_DOMAIN"/>
    <property type="match status" value="1"/>
</dbReference>
<protein>
    <recommendedName>
        <fullName evidence="4">NTF2-related export protein 2</fullName>
    </recommendedName>
    <alternativeName>
        <fullName>Protein p15-2</fullName>
    </alternativeName>
</protein>
<feature type="chain" id="PRO_0000194795" description="NTF2-related export protein 2">
    <location>
        <begin position="1"/>
        <end position="142"/>
    </location>
</feature>
<feature type="domain" description="NTF2" evidence="1">
    <location>
        <begin position="17"/>
        <end position="136"/>
    </location>
</feature>
<feature type="splice variant" id="VSP_037539" description="In isoform 4." evidence="2">
    <location>
        <begin position="1"/>
        <end position="28"/>
    </location>
</feature>
<feature type="splice variant" id="VSP_037540" description="In isoform 3." evidence="3">
    <original>M</original>
    <variation>MRKYRSHWSQGDREGYQRRSNYYEGPHTSHSSPADRTREEVVTPTLPEHTATRSQM</variation>
    <location>
        <position position="1"/>
    </location>
</feature>
<name>NXT2_HUMAN</name>
<organism>
    <name type="scientific">Homo sapiens</name>
    <name type="common">Human</name>
    <dbReference type="NCBI Taxonomy" id="9606"/>
    <lineage>
        <taxon>Eukaryota</taxon>
        <taxon>Metazoa</taxon>
        <taxon>Chordata</taxon>
        <taxon>Craniata</taxon>
        <taxon>Vertebrata</taxon>
        <taxon>Euteleostomi</taxon>
        <taxon>Mammalia</taxon>
        <taxon>Eutheria</taxon>
        <taxon>Euarchontoglires</taxon>
        <taxon>Primates</taxon>
        <taxon>Haplorrhini</taxon>
        <taxon>Catarrhini</taxon>
        <taxon>Hominidae</taxon>
        <taxon>Homo</taxon>
    </lineage>
</organism>
<reference key="1">
    <citation type="journal article" date="2000" name="Mol. Cell. Biol.">
        <title>TAP (NXF1) belongs to a multigene family of putative RNA export factors with a conserved modular architecture.</title>
        <authorList>
            <person name="Herold A."/>
            <person name="Suyama M."/>
            <person name="Rodrigues J.P."/>
            <person name="Braun I.C."/>
            <person name="Kutay U."/>
            <person name="Carmo-Fonseca M."/>
            <person name="Bork P."/>
            <person name="Izaurralde E."/>
        </authorList>
    </citation>
    <scope>NUCLEOTIDE SEQUENCE [MRNA] (ISOFORMS 1 AND 4)</scope>
    <source>
        <tissue>Testis</tissue>
    </source>
</reference>
<reference key="2">
    <citation type="submission" date="2000-03" db="EMBL/GenBank/DDBJ databases">
        <title>p15-2, a homologous protein of p15, interacts with Tap.</title>
        <authorList>
            <person name="Kang Y."/>
            <person name="Cullen B."/>
        </authorList>
    </citation>
    <scope>NUCLEOTIDE SEQUENCE [MRNA] (ISOFORM 1)</scope>
</reference>
<reference key="3">
    <citation type="submission" date="1999-11" db="EMBL/GenBank/DDBJ databases">
        <title>Novel genes expressed in human dendritic cell.</title>
        <authorList>
            <person name="Li Y."/>
            <person name="Peng Y."/>
            <person name="Li N."/>
            <person name="Gu W."/>
            <person name="Han Z."/>
            <person name="Fu G."/>
            <person name="Chen Z."/>
        </authorList>
    </citation>
    <scope>NUCLEOTIDE SEQUENCE [LARGE SCALE MRNA] (ISOFORM 1)</scope>
    <source>
        <tissue>Dendritic cell</tissue>
    </source>
</reference>
<reference key="4">
    <citation type="journal article" date="2000" name="Genome Res.">
        <title>Cloning and functional analysis of cDNAs with open reading frames for 300 previously undefined genes expressed in CD34+ hematopoietic stem/progenitor cells.</title>
        <authorList>
            <person name="Zhang Q.-H."/>
            <person name="Ye M."/>
            <person name="Wu X.-Y."/>
            <person name="Ren S.-X."/>
            <person name="Zhao M."/>
            <person name="Zhao C.-J."/>
            <person name="Fu G."/>
            <person name="Shen Y."/>
            <person name="Fan H.-Y."/>
            <person name="Lu G."/>
            <person name="Zhong M."/>
            <person name="Xu X.-R."/>
            <person name="Han Z.-G."/>
            <person name="Zhang J.-W."/>
            <person name="Tao J."/>
            <person name="Huang Q.-H."/>
            <person name="Zhou J."/>
            <person name="Hu G.-X."/>
            <person name="Gu J."/>
            <person name="Chen S.-J."/>
            <person name="Chen Z."/>
        </authorList>
    </citation>
    <scope>NUCLEOTIDE SEQUENCE [LARGE SCALE MRNA] (ISOFORM 4)</scope>
    <source>
        <tissue>Bone marrow</tissue>
    </source>
</reference>
<reference key="5">
    <citation type="journal article" date="2004" name="Nat. Genet.">
        <title>Complete sequencing and characterization of 21,243 full-length human cDNAs.</title>
        <authorList>
            <person name="Ota T."/>
            <person name="Suzuki Y."/>
            <person name="Nishikawa T."/>
            <person name="Otsuki T."/>
            <person name="Sugiyama T."/>
            <person name="Irie R."/>
            <person name="Wakamatsu A."/>
            <person name="Hayashi K."/>
            <person name="Sato H."/>
            <person name="Nagai K."/>
            <person name="Kimura K."/>
            <person name="Makita H."/>
            <person name="Sekine M."/>
            <person name="Obayashi M."/>
            <person name="Nishi T."/>
            <person name="Shibahara T."/>
            <person name="Tanaka T."/>
            <person name="Ishii S."/>
            <person name="Yamamoto J."/>
            <person name="Saito K."/>
            <person name="Kawai Y."/>
            <person name="Isono Y."/>
            <person name="Nakamura Y."/>
            <person name="Nagahari K."/>
            <person name="Murakami K."/>
            <person name="Yasuda T."/>
            <person name="Iwayanagi T."/>
            <person name="Wagatsuma M."/>
            <person name="Shiratori A."/>
            <person name="Sudo H."/>
            <person name="Hosoiri T."/>
            <person name="Kaku Y."/>
            <person name="Kodaira H."/>
            <person name="Kondo H."/>
            <person name="Sugawara M."/>
            <person name="Takahashi M."/>
            <person name="Kanda K."/>
            <person name="Yokoi T."/>
            <person name="Furuya T."/>
            <person name="Kikkawa E."/>
            <person name="Omura Y."/>
            <person name="Abe K."/>
            <person name="Kamihara K."/>
            <person name="Katsuta N."/>
            <person name="Sato K."/>
            <person name="Tanikawa M."/>
            <person name="Yamazaki M."/>
            <person name="Ninomiya K."/>
            <person name="Ishibashi T."/>
            <person name="Yamashita H."/>
            <person name="Murakawa K."/>
            <person name="Fujimori K."/>
            <person name="Tanai H."/>
            <person name="Kimata M."/>
            <person name="Watanabe M."/>
            <person name="Hiraoka S."/>
            <person name="Chiba Y."/>
            <person name="Ishida S."/>
            <person name="Ono Y."/>
            <person name="Takiguchi S."/>
            <person name="Watanabe S."/>
            <person name="Yosida M."/>
            <person name="Hotuta T."/>
            <person name="Kusano J."/>
            <person name="Kanehori K."/>
            <person name="Takahashi-Fujii A."/>
            <person name="Hara H."/>
            <person name="Tanase T.-O."/>
            <person name="Nomura Y."/>
            <person name="Togiya S."/>
            <person name="Komai F."/>
            <person name="Hara R."/>
            <person name="Takeuchi K."/>
            <person name="Arita M."/>
            <person name="Imose N."/>
            <person name="Musashino K."/>
            <person name="Yuuki H."/>
            <person name="Oshima A."/>
            <person name="Sasaki N."/>
            <person name="Aotsuka S."/>
            <person name="Yoshikawa Y."/>
            <person name="Matsunawa H."/>
            <person name="Ichihara T."/>
            <person name="Shiohata N."/>
            <person name="Sano S."/>
            <person name="Moriya S."/>
            <person name="Momiyama H."/>
            <person name="Satoh N."/>
            <person name="Takami S."/>
            <person name="Terashima Y."/>
            <person name="Suzuki O."/>
            <person name="Nakagawa S."/>
            <person name="Senoh A."/>
            <person name="Mizoguchi H."/>
            <person name="Goto Y."/>
            <person name="Shimizu F."/>
            <person name="Wakebe H."/>
            <person name="Hishigaki H."/>
            <person name="Watanabe T."/>
            <person name="Sugiyama A."/>
            <person name="Takemoto M."/>
            <person name="Kawakami B."/>
            <person name="Yamazaki M."/>
            <person name="Watanabe K."/>
            <person name="Kumagai A."/>
            <person name="Itakura S."/>
            <person name="Fukuzumi Y."/>
            <person name="Fujimori Y."/>
            <person name="Komiyama M."/>
            <person name="Tashiro H."/>
            <person name="Tanigami A."/>
            <person name="Fujiwara T."/>
            <person name="Ono T."/>
            <person name="Yamada K."/>
            <person name="Fujii Y."/>
            <person name="Ozaki K."/>
            <person name="Hirao M."/>
            <person name="Ohmori Y."/>
            <person name="Kawabata A."/>
            <person name="Hikiji T."/>
            <person name="Kobatake N."/>
            <person name="Inagaki H."/>
            <person name="Ikema Y."/>
            <person name="Okamoto S."/>
            <person name="Okitani R."/>
            <person name="Kawakami T."/>
            <person name="Noguchi S."/>
            <person name="Itoh T."/>
            <person name="Shigeta K."/>
            <person name="Senba T."/>
            <person name="Matsumura K."/>
            <person name="Nakajima Y."/>
            <person name="Mizuno T."/>
            <person name="Morinaga M."/>
            <person name="Sasaki M."/>
            <person name="Togashi T."/>
            <person name="Oyama M."/>
            <person name="Hata H."/>
            <person name="Watanabe M."/>
            <person name="Komatsu T."/>
            <person name="Mizushima-Sugano J."/>
            <person name="Satoh T."/>
            <person name="Shirai Y."/>
            <person name="Takahashi Y."/>
            <person name="Nakagawa K."/>
            <person name="Okumura K."/>
            <person name="Nagase T."/>
            <person name="Nomura N."/>
            <person name="Kikuchi H."/>
            <person name="Masuho Y."/>
            <person name="Yamashita R."/>
            <person name="Nakai K."/>
            <person name="Yada T."/>
            <person name="Nakamura Y."/>
            <person name="Ohara O."/>
            <person name="Isogai T."/>
            <person name="Sugano S."/>
        </authorList>
    </citation>
    <scope>NUCLEOTIDE SEQUENCE [LARGE SCALE MRNA] (ISOFORM 1)</scope>
    <source>
        <tissue>Ovarian carcinoma</tissue>
    </source>
</reference>
<reference key="6">
    <citation type="journal article" date="2005" name="Nature">
        <title>The DNA sequence of the human X chromosome.</title>
        <authorList>
            <person name="Ross M.T."/>
            <person name="Grafham D.V."/>
            <person name="Coffey A.J."/>
            <person name="Scherer S."/>
            <person name="McLay K."/>
            <person name="Muzny D."/>
            <person name="Platzer M."/>
            <person name="Howell G.R."/>
            <person name="Burrows C."/>
            <person name="Bird C.P."/>
            <person name="Frankish A."/>
            <person name="Lovell F.L."/>
            <person name="Howe K.L."/>
            <person name="Ashurst J.L."/>
            <person name="Fulton R.S."/>
            <person name="Sudbrak R."/>
            <person name="Wen G."/>
            <person name="Jones M.C."/>
            <person name="Hurles M.E."/>
            <person name="Andrews T.D."/>
            <person name="Scott C.E."/>
            <person name="Searle S."/>
            <person name="Ramser J."/>
            <person name="Whittaker A."/>
            <person name="Deadman R."/>
            <person name="Carter N.P."/>
            <person name="Hunt S.E."/>
            <person name="Chen R."/>
            <person name="Cree A."/>
            <person name="Gunaratne P."/>
            <person name="Havlak P."/>
            <person name="Hodgson A."/>
            <person name="Metzker M.L."/>
            <person name="Richards S."/>
            <person name="Scott G."/>
            <person name="Steffen D."/>
            <person name="Sodergren E."/>
            <person name="Wheeler D.A."/>
            <person name="Worley K.C."/>
            <person name="Ainscough R."/>
            <person name="Ambrose K.D."/>
            <person name="Ansari-Lari M.A."/>
            <person name="Aradhya S."/>
            <person name="Ashwell R.I."/>
            <person name="Babbage A.K."/>
            <person name="Bagguley C.L."/>
            <person name="Ballabio A."/>
            <person name="Banerjee R."/>
            <person name="Barker G.E."/>
            <person name="Barlow K.F."/>
            <person name="Barrett I.P."/>
            <person name="Bates K.N."/>
            <person name="Beare D.M."/>
            <person name="Beasley H."/>
            <person name="Beasley O."/>
            <person name="Beck A."/>
            <person name="Bethel G."/>
            <person name="Blechschmidt K."/>
            <person name="Brady N."/>
            <person name="Bray-Allen S."/>
            <person name="Bridgeman A.M."/>
            <person name="Brown A.J."/>
            <person name="Brown M.J."/>
            <person name="Bonnin D."/>
            <person name="Bruford E.A."/>
            <person name="Buhay C."/>
            <person name="Burch P."/>
            <person name="Burford D."/>
            <person name="Burgess J."/>
            <person name="Burrill W."/>
            <person name="Burton J."/>
            <person name="Bye J.M."/>
            <person name="Carder C."/>
            <person name="Carrel L."/>
            <person name="Chako J."/>
            <person name="Chapman J.C."/>
            <person name="Chavez D."/>
            <person name="Chen E."/>
            <person name="Chen G."/>
            <person name="Chen Y."/>
            <person name="Chen Z."/>
            <person name="Chinault C."/>
            <person name="Ciccodicola A."/>
            <person name="Clark S.Y."/>
            <person name="Clarke G."/>
            <person name="Clee C.M."/>
            <person name="Clegg S."/>
            <person name="Clerc-Blankenburg K."/>
            <person name="Clifford K."/>
            <person name="Cobley V."/>
            <person name="Cole C.G."/>
            <person name="Conquer J.S."/>
            <person name="Corby N."/>
            <person name="Connor R.E."/>
            <person name="David R."/>
            <person name="Davies J."/>
            <person name="Davis C."/>
            <person name="Davis J."/>
            <person name="Delgado O."/>
            <person name="Deshazo D."/>
            <person name="Dhami P."/>
            <person name="Ding Y."/>
            <person name="Dinh H."/>
            <person name="Dodsworth S."/>
            <person name="Draper H."/>
            <person name="Dugan-Rocha S."/>
            <person name="Dunham A."/>
            <person name="Dunn M."/>
            <person name="Durbin K.J."/>
            <person name="Dutta I."/>
            <person name="Eades T."/>
            <person name="Ellwood M."/>
            <person name="Emery-Cohen A."/>
            <person name="Errington H."/>
            <person name="Evans K.L."/>
            <person name="Faulkner L."/>
            <person name="Francis F."/>
            <person name="Frankland J."/>
            <person name="Fraser A.E."/>
            <person name="Galgoczy P."/>
            <person name="Gilbert J."/>
            <person name="Gill R."/>
            <person name="Gloeckner G."/>
            <person name="Gregory S.G."/>
            <person name="Gribble S."/>
            <person name="Griffiths C."/>
            <person name="Grocock R."/>
            <person name="Gu Y."/>
            <person name="Gwilliam R."/>
            <person name="Hamilton C."/>
            <person name="Hart E.A."/>
            <person name="Hawes A."/>
            <person name="Heath P.D."/>
            <person name="Heitmann K."/>
            <person name="Hennig S."/>
            <person name="Hernandez J."/>
            <person name="Hinzmann B."/>
            <person name="Ho S."/>
            <person name="Hoffs M."/>
            <person name="Howden P.J."/>
            <person name="Huckle E.J."/>
            <person name="Hume J."/>
            <person name="Hunt P.J."/>
            <person name="Hunt A.R."/>
            <person name="Isherwood J."/>
            <person name="Jacob L."/>
            <person name="Johnson D."/>
            <person name="Jones S."/>
            <person name="de Jong P.J."/>
            <person name="Joseph S.S."/>
            <person name="Keenan S."/>
            <person name="Kelly S."/>
            <person name="Kershaw J.K."/>
            <person name="Khan Z."/>
            <person name="Kioschis P."/>
            <person name="Klages S."/>
            <person name="Knights A.J."/>
            <person name="Kosiura A."/>
            <person name="Kovar-Smith C."/>
            <person name="Laird G.K."/>
            <person name="Langford C."/>
            <person name="Lawlor S."/>
            <person name="Leversha M."/>
            <person name="Lewis L."/>
            <person name="Liu W."/>
            <person name="Lloyd C."/>
            <person name="Lloyd D.M."/>
            <person name="Loulseged H."/>
            <person name="Loveland J.E."/>
            <person name="Lovell J.D."/>
            <person name="Lozado R."/>
            <person name="Lu J."/>
            <person name="Lyne R."/>
            <person name="Ma J."/>
            <person name="Maheshwari M."/>
            <person name="Matthews L.H."/>
            <person name="McDowall J."/>
            <person name="McLaren S."/>
            <person name="McMurray A."/>
            <person name="Meidl P."/>
            <person name="Meitinger T."/>
            <person name="Milne S."/>
            <person name="Miner G."/>
            <person name="Mistry S.L."/>
            <person name="Morgan M."/>
            <person name="Morris S."/>
            <person name="Mueller I."/>
            <person name="Mullikin J.C."/>
            <person name="Nguyen N."/>
            <person name="Nordsiek G."/>
            <person name="Nyakatura G."/>
            <person name="O'dell C.N."/>
            <person name="Okwuonu G."/>
            <person name="Palmer S."/>
            <person name="Pandian R."/>
            <person name="Parker D."/>
            <person name="Parrish J."/>
            <person name="Pasternak S."/>
            <person name="Patel D."/>
            <person name="Pearce A.V."/>
            <person name="Pearson D.M."/>
            <person name="Pelan S.E."/>
            <person name="Perez L."/>
            <person name="Porter K.M."/>
            <person name="Ramsey Y."/>
            <person name="Reichwald K."/>
            <person name="Rhodes S."/>
            <person name="Ridler K.A."/>
            <person name="Schlessinger D."/>
            <person name="Schueler M.G."/>
            <person name="Sehra H.K."/>
            <person name="Shaw-Smith C."/>
            <person name="Shen H."/>
            <person name="Sheridan E.M."/>
            <person name="Shownkeen R."/>
            <person name="Skuce C.D."/>
            <person name="Smith M.L."/>
            <person name="Sotheran E.C."/>
            <person name="Steingruber H.E."/>
            <person name="Steward C.A."/>
            <person name="Storey R."/>
            <person name="Swann R.M."/>
            <person name="Swarbreck D."/>
            <person name="Tabor P.E."/>
            <person name="Taudien S."/>
            <person name="Taylor T."/>
            <person name="Teague B."/>
            <person name="Thomas K."/>
            <person name="Thorpe A."/>
            <person name="Timms K."/>
            <person name="Tracey A."/>
            <person name="Trevanion S."/>
            <person name="Tromans A.C."/>
            <person name="d'Urso M."/>
            <person name="Verduzco D."/>
            <person name="Villasana D."/>
            <person name="Waldron L."/>
            <person name="Wall M."/>
            <person name="Wang Q."/>
            <person name="Warren J."/>
            <person name="Warry G.L."/>
            <person name="Wei X."/>
            <person name="West A."/>
            <person name="Whitehead S.L."/>
            <person name="Whiteley M.N."/>
            <person name="Wilkinson J.E."/>
            <person name="Willey D.L."/>
            <person name="Williams G."/>
            <person name="Williams L."/>
            <person name="Williamson A."/>
            <person name="Williamson H."/>
            <person name="Wilming L."/>
            <person name="Woodmansey R.L."/>
            <person name="Wray P.W."/>
            <person name="Yen J."/>
            <person name="Zhang J."/>
            <person name="Zhou J."/>
            <person name="Zoghbi H."/>
            <person name="Zorilla S."/>
            <person name="Buck D."/>
            <person name="Reinhardt R."/>
            <person name="Poustka A."/>
            <person name="Rosenthal A."/>
            <person name="Lehrach H."/>
            <person name="Meindl A."/>
            <person name="Minx P.J."/>
            <person name="Hillier L.W."/>
            <person name="Willard H.F."/>
            <person name="Wilson R.K."/>
            <person name="Waterston R.H."/>
            <person name="Rice C.M."/>
            <person name="Vaudin M."/>
            <person name="Coulson A."/>
            <person name="Nelson D.L."/>
            <person name="Weinstock G."/>
            <person name="Sulston J.E."/>
            <person name="Durbin R.M."/>
            <person name="Hubbard T."/>
            <person name="Gibbs R.A."/>
            <person name="Beck S."/>
            <person name="Rogers J."/>
            <person name="Bentley D.R."/>
        </authorList>
    </citation>
    <scope>NUCLEOTIDE SEQUENCE [LARGE SCALE GENOMIC DNA]</scope>
</reference>
<reference key="7">
    <citation type="submission" date="2005-09" db="EMBL/GenBank/DDBJ databases">
        <authorList>
            <person name="Mural R.J."/>
            <person name="Istrail S."/>
            <person name="Sutton G.G."/>
            <person name="Florea L."/>
            <person name="Halpern A.L."/>
            <person name="Mobarry C.M."/>
            <person name="Lippert R."/>
            <person name="Walenz B."/>
            <person name="Shatkay H."/>
            <person name="Dew I."/>
            <person name="Miller J.R."/>
            <person name="Flanigan M.J."/>
            <person name="Edwards N.J."/>
            <person name="Bolanos R."/>
            <person name="Fasulo D."/>
            <person name="Halldorsson B.V."/>
            <person name="Hannenhalli S."/>
            <person name="Turner R."/>
            <person name="Yooseph S."/>
            <person name="Lu F."/>
            <person name="Nusskern D.R."/>
            <person name="Shue B.C."/>
            <person name="Zheng X.H."/>
            <person name="Zhong F."/>
            <person name="Delcher A.L."/>
            <person name="Huson D.H."/>
            <person name="Kravitz S.A."/>
            <person name="Mouchard L."/>
            <person name="Reinert K."/>
            <person name="Remington K.A."/>
            <person name="Clark A.G."/>
            <person name="Waterman M.S."/>
            <person name="Eichler E.E."/>
            <person name="Adams M.D."/>
            <person name="Hunkapiller M.W."/>
            <person name="Myers E.W."/>
            <person name="Venter J.C."/>
        </authorList>
    </citation>
    <scope>NUCLEOTIDE SEQUENCE [LARGE SCALE GENOMIC DNA]</scope>
</reference>
<reference key="8">
    <citation type="journal article" date="2004" name="Genome Res.">
        <title>The status, quality, and expansion of the NIH full-length cDNA project: the Mammalian Gene Collection (MGC).</title>
        <authorList>
            <consortium name="The MGC Project Team"/>
        </authorList>
    </citation>
    <scope>NUCLEOTIDE SEQUENCE [LARGE SCALE MRNA] (ISOFORMS 1 AND 3)</scope>
    <source>
        <tissue>Uterus</tissue>
    </source>
</reference>
<gene>
    <name evidence="5" type="primary">NXT2</name>
    <name type="ORF">BM-025</name>
    <name type="ORF">DC9</name>
</gene>